<keyword id="KW-0002">3D-structure</keyword>
<keyword id="KW-0106">Calcium</keyword>
<keyword id="KW-0903">Direct protein sequencing</keyword>
<keyword id="KW-0479">Metal-binding</keyword>
<keyword id="KW-0574">Periplasm</keyword>
<keyword id="KW-1185">Reference proteome</keyword>
<keyword id="KW-0732">Signal</keyword>
<keyword id="KW-0813">Transport</keyword>
<sequence>MRLFREIAANDPGPTGRMKNMKTFTTALATGVLALCPLAALADSSDPIVIPIHNWSSQIVMSNVVGQIFEEMGVAVEFVTTDSQAVYESVRLGDVTLELEVWEGAFGASFRAALEKGGIVDVGDHDAVTREDWWYPMWTKDACPGLPDWKALNDCAAVFATAETGDKGRYLDGPVDWLKHGKERVEALGMNFEVINAGSAAALWAEIGAAEADKRPVVVFNWTPNFAEAVWPGEFVEFPEWVDGCDKDPAVGPNPDALYDCGNPATGYLKKAAWEGMEAKWPDAYAVLTRISFTNPQIAEMAKLVDVDEMEPDEAAEAWLEANEDVWRPWLDG</sequence>
<gene>
    <name evidence="3" type="primary">tmoX</name>
    <name evidence="6" type="ordered locus">SPO1548</name>
</gene>
<dbReference type="EMBL" id="CP000031">
    <property type="protein sequence ID" value="AAV94835.1"/>
    <property type="molecule type" value="Genomic_DNA"/>
</dbReference>
<dbReference type="PDB" id="4XZ6">
    <property type="method" value="X-ray"/>
    <property type="resolution" value="2.20 A"/>
    <property type="chains" value="A/B=1-333"/>
</dbReference>
<dbReference type="PDBsum" id="4XZ6"/>
<dbReference type="SMR" id="Q5LT66"/>
<dbReference type="STRING" id="246200.SPO1548"/>
<dbReference type="PaxDb" id="246200-SPO1548"/>
<dbReference type="KEGG" id="sil:SPO1548"/>
<dbReference type="eggNOG" id="COG2113">
    <property type="taxonomic scope" value="Bacteria"/>
</dbReference>
<dbReference type="HOGENOM" id="CLU_072064_0_0_5"/>
<dbReference type="EvolutionaryTrace" id="Q5LT66"/>
<dbReference type="Proteomes" id="UP000001023">
    <property type="component" value="Chromosome"/>
</dbReference>
<dbReference type="GO" id="GO:0043190">
    <property type="term" value="C:ATP-binding cassette (ABC) transporter complex"/>
    <property type="evidence" value="ECO:0007669"/>
    <property type="project" value="InterPro"/>
</dbReference>
<dbReference type="GO" id="GO:0042597">
    <property type="term" value="C:periplasmic space"/>
    <property type="evidence" value="ECO:0007669"/>
    <property type="project" value="UniProtKB-SubCell"/>
</dbReference>
<dbReference type="GO" id="GO:0046872">
    <property type="term" value="F:metal ion binding"/>
    <property type="evidence" value="ECO:0007669"/>
    <property type="project" value="UniProtKB-KW"/>
</dbReference>
<dbReference type="GO" id="GO:0022857">
    <property type="term" value="F:transmembrane transporter activity"/>
    <property type="evidence" value="ECO:0007669"/>
    <property type="project" value="InterPro"/>
</dbReference>
<dbReference type="CDD" id="cd13643">
    <property type="entry name" value="PBP2_BCP_2"/>
    <property type="match status" value="1"/>
</dbReference>
<dbReference type="Gene3D" id="3.10.105.10">
    <property type="entry name" value="Dipeptide-binding Protein, Domain 3"/>
    <property type="match status" value="1"/>
</dbReference>
<dbReference type="Gene3D" id="3.40.190.100">
    <property type="entry name" value="Glycine betaine-binding periplasmic protein, domain 2"/>
    <property type="match status" value="1"/>
</dbReference>
<dbReference type="Gene3D" id="3.40.190.10">
    <property type="entry name" value="Periplasmic binding protein-like II"/>
    <property type="match status" value="1"/>
</dbReference>
<dbReference type="InterPro" id="IPR007210">
    <property type="entry name" value="ABC_Gly_betaine_transp_sub-bd"/>
</dbReference>
<dbReference type="Pfam" id="PF04069">
    <property type="entry name" value="OpuAC"/>
    <property type="match status" value="1"/>
</dbReference>
<dbReference type="SUPFAM" id="SSF53850">
    <property type="entry name" value="Periplasmic binding protein-like II"/>
    <property type="match status" value="1"/>
</dbReference>
<evidence type="ECO:0000269" key="1">
    <source>
    </source>
</evidence>
<evidence type="ECO:0000269" key="2">
    <source>
    </source>
</evidence>
<evidence type="ECO:0000303" key="3">
    <source>
    </source>
</evidence>
<evidence type="ECO:0000305" key="4"/>
<evidence type="ECO:0000305" key="5">
    <source>
    </source>
</evidence>
<evidence type="ECO:0000312" key="6">
    <source>
        <dbReference type="EMBL" id="AAV94835.1"/>
    </source>
</evidence>
<evidence type="ECO:0007744" key="7">
    <source>
        <dbReference type="PDB" id="4XZ6"/>
    </source>
</evidence>
<evidence type="ECO:0007829" key="8">
    <source>
        <dbReference type="PDB" id="4XZ6"/>
    </source>
</evidence>
<protein>
    <recommendedName>
        <fullName evidence="4">Trimethylamine N-oxide-binding protein</fullName>
        <shortName evidence="4">TMAO-binding protein</shortName>
    </recommendedName>
</protein>
<organism>
    <name type="scientific">Ruegeria pomeroyi (strain ATCC 700808 / DSM 15171 / DSS-3)</name>
    <name type="common">Silicibacter pomeroyi</name>
    <dbReference type="NCBI Taxonomy" id="246200"/>
    <lineage>
        <taxon>Bacteria</taxon>
        <taxon>Pseudomonadati</taxon>
        <taxon>Pseudomonadota</taxon>
        <taxon>Alphaproteobacteria</taxon>
        <taxon>Rhodobacterales</taxon>
        <taxon>Roseobacteraceae</taxon>
        <taxon>Ruegeria</taxon>
    </lineage>
</organism>
<feature type="signal peptide" evidence="2">
    <location>
        <begin position="1"/>
        <end position="42"/>
    </location>
</feature>
<feature type="chain" id="PRO_5004258599" description="Trimethylamine N-oxide-binding protein">
    <location>
        <begin position="43"/>
        <end position="333"/>
    </location>
</feature>
<feature type="binding site" evidence="2 7">
    <location>
        <position position="55"/>
    </location>
    <ligand>
        <name>trimethylamine N-oxide</name>
        <dbReference type="ChEBI" id="CHEBI:15724"/>
    </ligand>
</feature>
<feature type="binding site" evidence="2 7">
    <location>
        <position position="102"/>
    </location>
    <ligand>
        <name>trimethylamine N-oxide</name>
        <dbReference type="ChEBI" id="CHEBI:15724"/>
    </ligand>
</feature>
<feature type="binding site" evidence="2 7">
    <location>
        <position position="131"/>
    </location>
    <ligand>
        <name>trimethylamine N-oxide</name>
        <dbReference type="ChEBI" id="CHEBI:15724"/>
    </ligand>
</feature>
<feature type="binding site" evidence="2 7">
    <location>
        <position position="177"/>
    </location>
    <ligand>
        <name>trimethylamine N-oxide</name>
        <dbReference type="ChEBI" id="CHEBI:15724"/>
    </ligand>
</feature>
<feature type="binding site" evidence="2 7">
    <location>
        <position position="222"/>
    </location>
    <ligand>
        <name>trimethylamine N-oxide</name>
        <dbReference type="ChEBI" id="CHEBI:15724"/>
    </ligand>
</feature>
<feature type="binding site" evidence="2 7">
    <location>
        <position position="249"/>
    </location>
    <ligand>
        <name>Ca(2+)</name>
        <dbReference type="ChEBI" id="CHEBI:29108"/>
    </ligand>
</feature>
<feature type="binding site" evidence="2 7">
    <location>
        <position position="251"/>
    </location>
    <ligand>
        <name>Ca(2+)</name>
        <dbReference type="ChEBI" id="CHEBI:29108"/>
    </ligand>
</feature>
<feature type="binding site" evidence="2 7">
    <location>
        <position position="254"/>
    </location>
    <ligand>
        <name>Ca(2+)</name>
        <dbReference type="ChEBI" id="CHEBI:29108"/>
    </ligand>
</feature>
<feature type="binding site" evidence="2 7">
    <location>
        <position position="257"/>
    </location>
    <ligand>
        <name>Ca(2+)</name>
        <dbReference type="ChEBI" id="CHEBI:29108"/>
    </ligand>
</feature>
<feature type="binding site" evidence="2 7">
    <location>
        <position position="260"/>
    </location>
    <ligand>
        <name>Ca(2+)</name>
        <dbReference type="ChEBI" id="CHEBI:29108"/>
    </ligand>
</feature>
<feature type="mutagenesis site" description="Nearly complete abrogation of the TMAO-binding affinity." evidence="2">
    <original>W</original>
    <variation>A</variation>
    <location>
        <position position="55"/>
    </location>
</feature>
<feature type="mutagenesis site" description="Significant decrease in the TMAO-binding affinity." evidence="2">
    <original>W</original>
    <variation>F</variation>
    <location>
        <position position="55"/>
    </location>
</feature>
<feature type="mutagenesis site" description="Nearly complete abrogation of the TMAO-binding affinity." evidence="2">
    <original>W</original>
    <variation>A</variation>
    <location>
        <position position="102"/>
    </location>
</feature>
<feature type="mutagenesis site" description="Significant decrease in the TMAO-binding affinity." evidence="2">
    <original>W</original>
    <variation>F</variation>
    <location>
        <position position="102"/>
    </location>
</feature>
<feature type="mutagenesis site" description="Decrease in the TMAO-binding affinity." evidence="2">
    <original>F</original>
    <variation>A</variation>
    <location>
        <position position="106"/>
    </location>
</feature>
<feature type="mutagenesis site" description="Nearly complete abrogation of the TMAO-binding affinity." evidence="2">
    <original>E</original>
    <variation>A</variation>
    <location>
        <position position="131"/>
    </location>
</feature>
<feature type="mutagenesis site" description="Nearly complete abrogation of the TMAO-binding affinity." evidence="2">
    <original>W</original>
    <variation>A</variation>
    <location>
        <position position="177"/>
    </location>
</feature>
<feature type="mutagenesis site" description="Significant decrease in the TMAO-binding affinity." evidence="2">
    <original>W</original>
    <variation>F</variation>
    <location>
        <position position="177"/>
    </location>
</feature>
<feature type="mutagenesis site" description="Significant decrease in the TMAO-binding affinity." evidence="2">
    <original>F</original>
    <variation>A</variation>
    <location>
        <position position="220"/>
    </location>
</feature>
<feature type="mutagenesis site" description="Significant decrease in the TMAO-binding affinity." evidence="2">
    <original>W</original>
    <variation>A</variation>
    <location>
        <position position="222"/>
    </location>
</feature>
<feature type="mutagenesis site" description="Decrease in the TMAO-binding affinity." evidence="2">
    <original>W</original>
    <variation>F</variation>
    <location>
        <position position="222"/>
    </location>
</feature>
<feature type="strand" evidence="8">
    <location>
        <begin position="48"/>
        <end position="52"/>
    </location>
</feature>
<feature type="helix" evidence="8">
    <location>
        <begin position="56"/>
        <end position="71"/>
    </location>
</feature>
<feature type="strand" evidence="8">
    <location>
        <begin position="76"/>
        <end position="80"/>
    </location>
</feature>
<feature type="turn" evidence="8">
    <location>
        <begin position="83"/>
        <end position="85"/>
    </location>
</feature>
<feature type="helix" evidence="8">
    <location>
        <begin position="86"/>
        <end position="91"/>
    </location>
</feature>
<feature type="strand" evidence="8">
    <location>
        <begin position="97"/>
        <end position="102"/>
    </location>
</feature>
<feature type="helix" evidence="8">
    <location>
        <begin position="103"/>
        <end position="116"/>
    </location>
</feature>
<feature type="strand" evidence="8">
    <location>
        <begin position="117"/>
        <end position="124"/>
    </location>
</feature>
<feature type="strand" evidence="8">
    <location>
        <begin position="129"/>
        <end position="136"/>
    </location>
</feature>
<feature type="helix" evidence="8">
    <location>
        <begin position="139"/>
        <end position="142"/>
    </location>
</feature>
<feature type="turn" evidence="8">
    <location>
        <begin position="144"/>
        <end position="147"/>
    </location>
</feature>
<feature type="helix" evidence="8">
    <location>
        <begin position="149"/>
        <end position="154"/>
    </location>
</feature>
<feature type="helix" evidence="8">
    <location>
        <begin position="156"/>
        <end position="159"/>
    </location>
</feature>
<feature type="turn" evidence="8">
    <location>
        <begin position="162"/>
        <end position="166"/>
    </location>
</feature>
<feature type="strand" evidence="8">
    <location>
        <begin position="167"/>
        <end position="172"/>
    </location>
</feature>
<feature type="helix" evidence="8">
    <location>
        <begin position="181"/>
        <end position="188"/>
    </location>
</feature>
<feature type="strand" evidence="8">
    <location>
        <begin position="191"/>
        <end position="196"/>
    </location>
</feature>
<feature type="helix" evidence="8">
    <location>
        <begin position="200"/>
        <end position="210"/>
    </location>
</feature>
<feature type="turn" evidence="8">
    <location>
        <begin position="211"/>
        <end position="214"/>
    </location>
</feature>
<feature type="strand" evidence="8">
    <location>
        <begin position="218"/>
        <end position="226"/>
    </location>
</feature>
<feature type="helix" evidence="8">
    <location>
        <begin position="227"/>
        <end position="230"/>
    </location>
</feature>
<feature type="strand" evidence="8">
    <location>
        <begin position="233"/>
        <end position="235"/>
    </location>
</feature>
<feature type="turn" evidence="8">
    <location>
        <begin position="243"/>
        <end position="247"/>
    </location>
</feature>
<feature type="strand" evidence="8">
    <location>
        <begin position="251"/>
        <end position="253"/>
    </location>
</feature>
<feature type="strand" evidence="8">
    <location>
        <begin position="269"/>
        <end position="274"/>
    </location>
</feature>
<feature type="helix" evidence="8">
    <location>
        <begin position="277"/>
        <end position="280"/>
    </location>
</feature>
<feature type="helix" evidence="8">
    <location>
        <begin position="282"/>
        <end position="290"/>
    </location>
</feature>
<feature type="helix" evidence="8">
    <location>
        <begin position="295"/>
        <end position="306"/>
    </location>
</feature>
<feature type="helix" evidence="8">
    <location>
        <begin position="312"/>
        <end position="322"/>
    </location>
</feature>
<feature type="helix" evidence="8">
    <location>
        <begin position="324"/>
        <end position="327"/>
    </location>
</feature>
<feature type="helix" evidence="8">
    <location>
        <begin position="328"/>
        <end position="331"/>
    </location>
</feature>
<comment type="function">
    <text evidence="1 2">Part of the ABC transporter complex TmoXWV involved in trimethylamine N-oxide (TMAO) import (PubMed:24550299). Is specific for TMAO and essential for TMAO metabolism (PubMed:24550299). Binds TMAO with high affinity (PubMed:26283766). In vitro, also presents a high binding affinity for choline, however this transporter seems specific for TMAO and the choline-binding affinity presented by recombinant TmoX may not make physiological sense (PubMed:26283766).</text>
</comment>
<comment type="activity regulation">
    <text evidence="2">Binds a Ca(2+) ion, which has little effect on either the binding affinity or the secondary structure, but plays an important role in maintaining the stability of TmoX (PubMed:26283766). It may modulate the protein stability in response to biological needs and environmental changes (PubMed:26283766). Thermostability is dramatically decreased when Ca(2+) is removed by EDTA (PubMed:26283766).</text>
</comment>
<comment type="subunit">
    <text evidence="2 5">The complex is probably composed of two ATP-binding proteins (TmoW), two transmembrane proteins (TmoV) and a solute-binding protein (TmoX) (Probable). Monomer in solution, but forms homodimers in crystals (PubMed:26283766).</text>
</comment>
<comment type="subcellular location">
    <subcellularLocation>
        <location evidence="4">Periplasm</location>
    </subcellularLocation>
</comment>
<comment type="induction">
    <text evidence="1">Expression is induced by TMAO.</text>
</comment>
<comment type="domain">
    <text evidence="2">Can alternate between open and closed states for binding TMAO.</text>
</comment>
<comment type="disruption phenotype">
    <text evidence="1">Mutant shows significant reduced growth on TMAO as a sole nitrogen source (PubMed:24550299). Growth on trimethylamine (TMA), glycine betaine (GBT), choline and carnitine is unaffected (PubMed:24550299).</text>
</comment>
<reference key="1">
    <citation type="journal article" date="2004" name="Nature">
        <title>Genome sequence of Silicibacter pomeroyi reveals adaptations to the marine environment.</title>
        <authorList>
            <person name="Moran M.A."/>
            <person name="Buchan A."/>
            <person name="Gonzalez J.M."/>
            <person name="Heidelberg J.F."/>
            <person name="Whitman W.B."/>
            <person name="Kiene R.P."/>
            <person name="Henriksen J.R."/>
            <person name="King G.M."/>
            <person name="Belas R."/>
            <person name="Fuqua C."/>
            <person name="Brinkac L.M."/>
            <person name="Lewis M."/>
            <person name="Johri S."/>
            <person name="Weaver B."/>
            <person name="Pai G."/>
            <person name="Eisen J.A."/>
            <person name="Rahe E."/>
            <person name="Sheldon W.M."/>
            <person name="Ye W."/>
            <person name="Miller T.R."/>
            <person name="Carlton J."/>
            <person name="Rasko D.A."/>
            <person name="Paulsen I.T."/>
            <person name="Ren Q."/>
            <person name="Daugherty S.C."/>
            <person name="DeBoy R.T."/>
            <person name="Dodson R.J."/>
            <person name="Durkin A.S."/>
            <person name="Madupu R."/>
            <person name="Nelson W.C."/>
            <person name="Sullivan S.A."/>
            <person name="Rosovitz M.J."/>
            <person name="Haft D.H."/>
            <person name="Selengut J."/>
            <person name="Ward N."/>
        </authorList>
    </citation>
    <scope>NUCLEOTIDE SEQUENCE [LARGE SCALE GENOMIC DNA]</scope>
    <source>
        <strain>ATCC 700808 / DSM 15171 / DSS-3</strain>
    </source>
</reference>
<reference key="2">
    <citation type="journal article" date="2014" name="Stand. Genomic Sci.">
        <title>An updated genome annotation for the model marine bacterium Ruegeria pomeroyi DSS-3.</title>
        <authorList>
            <person name="Rivers A.R."/>
            <person name="Smith C.B."/>
            <person name="Moran M.A."/>
        </authorList>
    </citation>
    <scope>GENOME REANNOTATION</scope>
    <source>
        <strain>ATCC 700808 / DSM 15171 / DSS-3</strain>
    </source>
</reference>
<reference key="3">
    <citation type="journal article" date="2014" name="Proc. Natl. Acad. Sci. U.S.A.">
        <title>Trimethylamine N-oxide metabolism by abundant marine heterotrophic bacteria.</title>
        <authorList>
            <person name="Lidbury I."/>
            <person name="Murrell J.C."/>
            <person name="Chen Y."/>
        </authorList>
    </citation>
    <scope>FUNCTION IN TMAO TRANSPORT</scope>
    <scope>INDUCTION</scope>
    <scope>DISRUPTION PHENOTYPE</scope>
    <source>
        <strain>ATCC 700808 / DSM 15171 / DSS-3</strain>
    </source>
</reference>
<reference evidence="7" key="4">
    <citation type="journal article" date="2015" name="J. Bacteriol.">
        <title>Mechanistic insight into trimethylamine N-oxide recognition by the marine bacterium Ruegeria pomeroyi DSS-3.</title>
        <authorList>
            <person name="Li C.Y."/>
            <person name="Chen X.L."/>
            <person name="Shao X."/>
            <person name="Wei T.D."/>
            <person name="Wang P."/>
            <person name="Xie B.B."/>
            <person name="Qin Q.L."/>
            <person name="Zhang X.Y."/>
            <person name="Su H.N."/>
            <person name="Song X.Y."/>
            <person name="Shi M."/>
            <person name="Zhou B.C."/>
            <person name="Zhang Y.Z."/>
        </authorList>
    </citation>
    <scope>X-RAY CRYSTALLOGRAPHY (2.20 ANGSTROMS) IN COMPLEX WITH CA(2+) AND TMAO</scope>
    <scope>PROTEIN SEQUENCE OF 43-52</scope>
    <scope>FUNCTION</scope>
    <scope>ACTIVITY REGULATION</scope>
    <scope>SUBUNIT</scope>
    <scope>DOMAIN</scope>
    <scope>MUTAGENESIS OF TRP-55; TRP-102; PHE-106; GLU-131; TRP-177; PHE-220 AND TRP-222</scope>
    <source>
        <strain>ATCC 700808 / DSM 15171 / DSS-3</strain>
    </source>
</reference>
<proteinExistence type="evidence at protein level"/>
<accession>Q5LT66</accession>
<name>TMOX_RUEPO</name>